<sequence>MQSSSPSQNHSTQVPIKVTHRQVKKRAIRRRRVDLVCGCSYYLHINCFNHGFTHRGSHHCSSSNEWRVYLGNKQSPVFHNHQAPTTTIPAEPGHHNSPGSIQSQPEEGAGDSQMFSQLPDLDNLTASDWSFLKGL</sequence>
<feature type="chain" id="PRO_0000222224" description="Transcriptional activator protein">
    <location>
        <begin position="1"/>
        <end position="135"/>
    </location>
</feature>
<feature type="zinc finger region" evidence="1">
    <location>
        <begin position="37"/>
        <end position="54"/>
    </location>
</feature>
<feature type="region of interest" description="Disordered" evidence="2">
    <location>
        <begin position="77"/>
        <end position="117"/>
    </location>
</feature>
<feature type="region of interest" description="Transactivation" evidence="1">
    <location>
        <begin position="120"/>
        <end position="135"/>
    </location>
</feature>
<feature type="short sequence motif" description="Nuclear localization signal" evidence="1">
    <location>
        <begin position="17"/>
        <end position="32"/>
    </location>
</feature>
<feature type="compositionally biased region" description="Polar residues" evidence="2">
    <location>
        <begin position="77"/>
        <end position="88"/>
    </location>
</feature>
<comment type="function">
    <text evidence="1 3 4">Strong activator of the late viral genes promoters. Enhances the expression of the capsid protein and nuclear shuttle protein. Acts as a suppressor of RNA-mediated gene silencing, also known as post-transcriptional gene silencing (PTGS), a mechanism of plant viral defense that limits the accumulation of viral RNAs. Suppresses the host RNA silencing by inhibiting adenosine kinase 2 (ADK2), a kinase involved in a general methylation pathway. Also suppresses the host basal defense by interacting with and inhibiting SNF1 kinase, a key regulator of cell metabolism implicated in innate antiviral defense. Determines pathogenicity (By similarity).</text>
</comment>
<comment type="subunit">
    <text evidence="1">Monomer. Homodimer. Homooligomer. Self-interaction correlates with nuclear localization and efficient activation of transcription. Monomers suppress local silencing by interacting with and inactivating host adenosine kinase 2 (ADK2) in the cytoplasm. Interacts with and inhibits host SNF1 kinase. Binds to ssDNA (By similarity).</text>
</comment>
<comment type="subcellular location">
    <subcellularLocation>
        <location evidence="1">Host nucleus</location>
    </subcellularLocation>
    <subcellularLocation>
        <location evidence="1">Host cytoplasm</location>
    </subcellularLocation>
    <text evidence="1">The phosphorylated form appears to accumulate almost exclusively in the nucleus, whereas the non-phosphorylated form is found in both nucleus and cytoplasm.</text>
</comment>
<comment type="domain">
    <text>The zinc finger and the transactivation region are involved in PTGS suppression.</text>
</comment>
<comment type="PTM">
    <text evidence="1">Phosphorylated.</text>
</comment>
<comment type="similarity">
    <text evidence="5">Belongs to the geminiviridae transcriptional activator protein family.</text>
</comment>
<accession>P14976</accession>
<gene>
    <name type="ORF">AC2</name>
    <name type="ORF">AL2</name>
</gene>
<name>TRAP_CLVK</name>
<dbReference type="EMBL" id="J02057">
    <property type="status" value="NOT_ANNOTATED_CDS"/>
    <property type="molecule type" value="Genomic_DNA"/>
</dbReference>
<dbReference type="Proteomes" id="UP000008452">
    <property type="component" value="Genome"/>
</dbReference>
<dbReference type="GO" id="GO:0030430">
    <property type="term" value="C:host cell cytoplasm"/>
    <property type="evidence" value="ECO:0007669"/>
    <property type="project" value="UniProtKB-SubCell"/>
</dbReference>
<dbReference type="GO" id="GO:0042025">
    <property type="term" value="C:host cell nucleus"/>
    <property type="evidence" value="ECO:0007669"/>
    <property type="project" value="UniProtKB-SubCell"/>
</dbReference>
<dbReference type="GO" id="GO:0019028">
    <property type="term" value="C:viral capsid"/>
    <property type="evidence" value="ECO:0007669"/>
    <property type="project" value="InterPro"/>
</dbReference>
<dbReference type="GO" id="GO:0003677">
    <property type="term" value="F:DNA binding"/>
    <property type="evidence" value="ECO:0007669"/>
    <property type="project" value="UniProtKB-KW"/>
</dbReference>
<dbReference type="GO" id="GO:0005198">
    <property type="term" value="F:structural molecule activity"/>
    <property type="evidence" value="ECO:0007669"/>
    <property type="project" value="InterPro"/>
</dbReference>
<dbReference type="GO" id="GO:0008270">
    <property type="term" value="F:zinc ion binding"/>
    <property type="evidence" value="ECO:0007669"/>
    <property type="project" value="UniProtKB-KW"/>
</dbReference>
<dbReference type="GO" id="GO:0052170">
    <property type="term" value="P:symbiont-mediated suppression of host innate immune response"/>
    <property type="evidence" value="ECO:0007669"/>
    <property type="project" value="UniProtKB-KW"/>
</dbReference>
<dbReference type="InterPro" id="IPR000942">
    <property type="entry name" value="Gemini_AL2"/>
</dbReference>
<dbReference type="Pfam" id="PF01440">
    <property type="entry name" value="Gemini_AL2"/>
    <property type="match status" value="1"/>
</dbReference>
<dbReference type="PRINTS" id="PR00230">
    <property type="entry name" value="GEMCOATAL2"/>
</dbReference>
<keyword id="KW-0010">Activator</keyword>
<keyword id="KW-0238">DNA-binding</keyword>
<keyword id="KW-1035">Host cytoplasm</keyword>
<keyword id="KW-1048">Host nucleus</keyword>
<keyword id="KW-0945">Host-virus interaction</keyword>
<keyword id="KW-1090">Inhibition of host innate immune response by virus</keyword>
<keyword id="KW-0479">Metal-binding</keyword>
<keyword id="KW-0597">Phosphoprotein</keyword>
<keyword id="KW-0941">Suppressor of RNA silencing</keyword>
<keyword id="KW-0899">Viral immunoevasion</keyword>
<keyword id="KW-0862">Zinc</keyword>
<keyword id="KW-0863">Zinc-finger</keyword>
<organismHost>
    <name type="scientific">Hewittia sublobata</name>
    <dbReference type="NCBI Taxonomy" id="197394"/>
</organismHost>
<organismHost>
    <name type="scientific">Jatropha multifida</name>
    <name type="common">Coralbush</name>
    <dbReference type="NCBI Taxonomy" id="3996"/>
</organismHost>
<organismHost>
    <name type="scientific">Laportea</name>
    <dbReference type="NCBI Taxonomy" id="194268"/>
</organismHost>
<organismHost>
    <name type="scientific">Manihot esculenta</name>
    <name type="common">Cassava</name>
    <name type="synonym">Jatropha manihot</name>
    <dbReference type="NCBI Taxonomy" id="3983"/>
</organismHost>
<evidence type="ECO:0000250" key="1"/>
<evidence type="ECO:0000256" key="2">
    <source>
        <dbReference type="SAM" id="MobiDB-lite"/>
    </source>
</evidence>
<evidence type="ECO:0000269" key="3">
    <source>
    </source>
</evidence>
<evidence type="ECO:0000269" key="4">
    <source>
    </source>
</evidence>
<evidence type="ECO:0000305" key="5"/>
<protein>
    <recommendedName>
        <fullName>Transcriptional activator protein</fullName>
        <shortName>TrAP</shortName>
    </recommendedName>
    <alternativeName>
        <fullName>15.2 kDa protein</fullName>
    </alternativeName>
    <alternativeName>
        <fullName>Protein AC2</fullName>
    </alternativeName>
    <alternativeName>
        <fullName>Protein AL2</fullName>
    </alternativeName>
</protein>
<proteinExistence type="evidence at protein level"/>
<organism>
    <name type="scientific">African cassava mosaic virus (isolate West Kenyan 844)</name>
    <name type="common">ACMV</name>
    <name type="synonym">Cassava latent virus (isolate West Kenyan 844)</name>
    <dbReference type="NCBI Taxonomy" id="10818"/>
    <lineage>
        <taxon>Viruses</taxon>
        <taxon>Monodnaviria</taxon>
        <taxon>Shotokuvirae</taxon>
        <taxon>Cressdnaviricota</taxon>
        <taxon>Repensiviricetes</taxon>
        <taxon>Geplafuvirales</taxon>
        <taxon>Geminiviridae</taxon>
        <taxon>Begomovirus</taxon>
        <taxon>Begomovirus manihotis</taxon>
    </lineage>
</organism>
<reference key="1">
    <citation type="journal article" date="1983" name="Nature">
        <title>Nucleotide sequence of cassava latent virus DNA.</title>
        <authorList>
            <person name="Stanley J."/>
            <person name="Gay M.R."/>
        </authorList>
    </citation>
    <scope>NUCLEOTIDE SEQUENCE [GENOMIC DNA]</scope>
</reference>
<reference key="2">
    <citation type="journal article" date="1999" name="Proc. Natl. Acad. Sci. U.S.A.">
        <title>Suppression of gene silencing: a general strategy used by diverse DNA and RNA viruses of plants.</title>
        <authorList>
            <person name="Voinnet O."/>
            <person name="Pinto Y.M."/>
            <person name="Baulcombe D.C."/>
        </authorList>
    </citation>
    <scope>FUNCTION</scope>
</reference>
<reference key="3">
    <citation type="journal article" date="2005" name="J. Virol.">
        <title>Adenosine kinase inhibition and suppression of RNA silencing by geminivirus AL2 and L2 proteins.</title>
        <authorList>
            <person name="Wang H."/>
            <person name="Buckley K.J."/>
            <person name="Yang X."/>
            <person name="Buchmann R.C."/>
            <person name="Bisaro D.M."/>
        </authorList>
    </citation>
    <scope>FUNCTION</scope>
    <scope>INTERACTION WITH NICOTIANA BENTHAMIANA ADK2</scope>
</reference>